<name>Y1579_PSEAE</name>
<dbReference type="EMBL" id="AE004091">
    <property type="protein sequence ID" value="AAG04968.1"/>
    <property type="molecule type" value="Genomic_DNA"/>
</dbReference>
<dbReference type="PIR" id="A83448">
    <property type="entry name" value="A83448"/>
</dbReference>
<dbReference type="RefSeq" id="NP_250270.1">
    <property type="nucleotide sequence ID" value="NC_002516.2"/>
</dbReference>
<dbReference type="RefSeq" id="WP_003104390.1">
    <property type="nucleotide sequence ID" value="NZ_QZGE01000003.1"/>
</dbReference>
<dbReference type="SMR" id="Q9I3D8"/>
<dbReference type="STRING" id="208964.PA1579"/>
<dbReference type="PaxDb" id="208964-PA1579"/>
<dbReference type="DNASU" id="880926"/>
<dbReference type="GeneID" id="880926"/>
<dbReference type="KEGG" id="pae:PA1579"/>
<dbReference type="PATRIC" id="fig|208964.12.peg.1638"/>
<dbReference type="PseudoCAP" id="PA1579"/>
<dbReference type="HOGENOM" id="CLU_095975_0_0_6"/>
<dbReference type="InParanoid" id="Q9I3D8"/>
<dbReference type="OrthoDB" id="5734556at2"/>
<dbReference type="PhylomeDB" id="Q9I3D8"/>
<dbReference type="BioCyc" id="PAER208964:G1FZ6-1609-MONOMER"/>
<dbReference type="Proteomes" id="UP000002438">
    <property type="component" value="Chromosome"/>
</dbReference>
<dbReference type="GO" id="GO:0005737">
    <property type="term" value="C:cytoplasm"/>
    <property type="evidence" value="ECO:0007669"/>
    <property type="project" value="UniProtKB-ARBA"/>
</dbReference>
<dbReference type="GO" id="GO:0008289">
    <property type="term" value="F:lipid binding"/>
    <property type="evidence" value="ECO:0007669"/>
    <property type="project" value="InterPro"/>
</dbReference>
<dbReference type="CDD" id="cd08876">
    <property type="entry name" value="START_1"/>
    <property type="match status" value="1"/>
</dbReference>
<dbReference type="Gene3D" id="3.30.530.20">
    <property type="match status" value="1"/>
</dbReference>
<dbReference type="InterPro" id="IPR023393">
    <property type="entry name" value="START-like_dom_sf"/>
</dbReference>
<dbReference type="InterPro" id="IPR028347">
    <property type="entry name" value="START_dom_prot"/>
</dbReference>
<dbReference type="InterPro" id="IPR002913">
    <property type="entry name" value="START_lipid-bd_dom"/>
</dbReference>
<dbReference type="InterPro" id="IPR051213">
    <property type="entry name" value="START_lipid_transfer"/>
</dbReference>
<dbReference type="PANTHER" id="PTHR19308">
    <property type="entry name" value="PHOSPHATIDYLCHOLINE TRANSFER PROTEIN"/>
    <property type="match status" value="1"/>
</dbReference>
<dbReference type="PANTHER" id="PTHR19308:SF14">
    <property type="entry name" value="START DOMAIN-CONTAINING PROTEIN"/>
    <property type="match status" value="1"/>
</dbReference>
<dbReference type="Pfam" id="PF01852">
    <property type="entry name" value="START"/>
    <property type="match status" value="1"/>
</dbReference>
<dbReference type="PIRSF" id="PIRSF039033">
    <property type="entry name" value="START_dom"/>
    <property type="match status" value="1"/>
</dbReference>
<dbReference type="SUPFAM" id="SSF55961">
    <property type="entry name" value="Bet v1-like"/>
    <property type="match status" value="1"/>
</dbReference>
<dbReference type="PROSITE" id="PS50848">
    <property type="entry name" value="START"/>
    <property type="match status" value="1"/>
</dbReference>
<gene>
    <name type="ordered locus">PA1579</name>
</gene>
<keyword id="KW-1185">Reference proteome</keyword>
<organism>
    <name type="scientific">Pseudomonas aeruginosa (strain ATCC 15692 / DSM 22644 / CIP 104116 / JCM 14847 / LMG 12228 / 1C / PRS 101 / PAO1)</name>
    <dbReference type="NCBI Taxonomy" id="208964"/>
    <lineage>
        <taxon>Bacteria</taxon>
        <taxon>Pseudomonadati</taxon>
        <taxon>Pseudomonadota</taxon>
        <taxon>Gammaproteobacteria</taxon>
        <taxon>Pseudomonadales</taxon>
        <taxon>Pseudomonadaceae</taxon>
        <taxon>Pseudomonas</taxon>
    </lineage>
</organism>
<feature type="chain" id="PRO_0000220663" description="Uncharacterized protein PA1579">
    <location>
        <begin position="1"/>
        <end position="202"/>
    </location>
</feature>
<feature type="domain" description="START" evidence="1">
    <location>
        <begin position="1"/>
        <end position="202"/>
    </location>
</feature>
<accession>Q9I3D8</accession>
<evidence type="ECO:0000255" key="1">
    <source>
        <dbReference type="PROSITE-ProRule" id="PRU00197"/>
    </source>
</evidence>
<proteinExistence type="predicted"/>
<reference key="1">
    <citation type="journal article" date="2000" name="Nature">
        <title>Complete genome sequence of Pseudomonas aeruginosa PAO1, an opportunistic pathogen.</title>
        <authorList>
            <person name="Stover C.K."/>
            <person name="Pham X.-Q.T."/>
            <person name="Erwin A.L."/>
            <person name="Mizoguchi S.D."/>
            <person name="Warrener P."/>
            <person name="Hickey M.J."/>
            <person name="Brinkman F.S.L."/>
            <person name="Hufnagle W.O."/>
            <person name="Kowalik D.J."/>
            <person name="Lagrou M."/>
            <person name="Garber R.L."/>
            <person name="Goltry L."/>
            <person name="Tolentino E."/>
            <person name="Westbrock-Wadman S."/>
            <person name="Yuan Y."/>
            <person name="Brody L.L."/>
            <person name="Coulter S.N."/>
            <person name="Folger K.R."/>
            <person name="Kas A."/>
            <person name="Larbig K."/>
            <person name="Lim R.M."/>
            <person name="Smith K.A."/>
            <person name="Spencer D.H."/>
            <person name="Wong G.K.-S."/>
            <person name="Wu Z."/>
            <person name="Paulsen I.T."/>
            <person name="Reizer J."/>
            <person name="Saier M.H. Jr."/>
            <person name="Hancock R.E.W."/>
            <person name="Lory S."/>
            <person name="Olson M.V."/>
        </authorList>
    </citation>
    <scope>NUCLEOTIDE SEQUENCE [LARGE SCALE GENOMIC DNA]</scope>
    <source>
        <strain>ATCC 15692 / DSM 22644 / CIP 104116 / JCM 14847 / LMG 12228 / 1C / PRS 101 / PAO1</strain>
    </source>
</reference>
<reference key="2">
    <citation type="journal article" date="2001" name="Proteins">
        <title>Adaptations of the helix-grip fold for ligand binding and catalysis in the START domain superfamily.</title>
        <authorList>
            <person name="Iyer L.M."/>
            <person name="Koonin E.V."/>
            <person name="Aravind L."/>
        </authorList>
    </citation>
    <scope>POTENTIAL FUNCTION</scope>
</reference>
<sequence>MRGILRMTVLAAAVFGVAGNALAEDWKLAKDEDGVKVYLSSVQGSKYKAYRGVTDIKADVATIEALQEDVKGSCKWIHACAEMKLLKQEGADAWTYSKIDMPWPVTGRDVVIHVTTEKTADGTVIRHLKADPTYIPEEKGQIRVPKLVGEWKLQPKGQGVTEVTYQVETEPGGSIPSWLANSFVVDAPLNTLKGLRSAAEKR</sequence>
<protein>
    <recommendedName>
        <fullName>Uncharacterized protein PA1579</fullName>
    </recommendedName>
</protein>
<comment type="function">
    <text>May play a role in the interaction of the bacterium with animal cells.</text>
</comment>